<sequence>MALAQESVFSVLYHLKHDPVDYWFHNWVLHGPMLFRSIGSGIVNFCTFQWVGWLIHLPIVRPDALASLFHEYDLPSSIEAGATPIRGMLTISQTVPTTAGMDPFLLGIMNSPALVISISTTTILCLRWLSLDLRWAAILAFFGNFLSNWLVVVAVLFGLDDLVARWYFLTPFTYVGSVLFIWYLVYKWIKVGLNFDLTSKGPFGMNPEVWRGLKIGMTGFTLGLCEQTVLFHKLIQPLSPHQLDLLHGFTSGTVRDHIVMHGAYVIGLFVGGVFLGSVILSVLIPAVDTWSEKKLLTQARFSLLLIMMTGASLPYYGFDYLLTRFADFAPDGGWRESTIFKPSLNKHLVSKNIHRKFTIADSTRRDTARPWREARNLFPERRWLLKVGTKSKAKLSTLPILDFVTHWRGGEDFVYSIVNPADFYRDLTKDPLQGKGKTLDKAVWKFVGNFFYQWKDEDLSRRKFQEQVKGIVDYARYRMVVINDIHVKGLVTTEQGDIRGVVDQHADMKLLQLPEAFVNQRLVKPPFLKHDWVLTIPKMSEQAKEERLLLKRQKMPPELSIEQQKTFFDSNAQKLFGTPNHYGLPEALDSSLESEEENLDPEEDIDPEIVDPLSSEESKTIDTLKVDLRTLSKNAKWVPKSVIQKQAAEKAEEERKAEEEKLLAVRNAKKKGLTVPKTEPKKGLTKQRQANPLGTPSLFYDKLHKRAEWNNEDFPHWGYMYHQLWKHRAYSHFMFRRLLEVDVDSMLARQPSRNFVTDADYQRLQYHQVALSSYHRSLRDYETSLWNVLLEPRANFFLAPNPLWRWDADWKVGFRAKSLENYVYDQRFKGTHRVVQRLFLLDTQFNPWDKTGPQFRYDQLLPLEEQDKGDRSNLWHEEIPREVRENVGAYDPFESQRVPPMFDPVPFYIGWDPILRKSVLTTSRLPKGTARVKLVLPGTQTPKWLKFIVSLESSDS</sequence>
<protein>
    <recommendedName>
        <fullName>Uncharacterized membrane protein ycf78</fullName>
    </recommendedName>
    <alternativeName>
        <fullName>RF1</fullName>
    </alternativeName>
    <alternativeName>
        <fullName>ycf1</fullName>
    </alternativeName>
</protein>
<name>YCF78_NEPOL</name>
<feature type="chain" id="PRO_0000293981" description="Uncharacterized membrane protein ycf78">
    <location>
        <begin position="1"/>
        <end position="956"/>
    </location>
</feature>
<feature type="transmembrane region" description="Helical" evidence="1">
    <location>
        <begin position="40"/>
        <end position="60"/>
    </location>
</feature>
<feature type="transmembrane region" description="Helical" evidence="1">
    <location>
        <begin position="104"/>
        <end position="124"/>
    </location>
</feature>
<feature type="transmembrane region" description="Helical" evidence="1">
    <location>
        <begin position="137"/>
        <end position="157"/>
    </location>
</feature>
<feature type="transmembrane region" description="Helical" evidence="1">
    <location>
        <begin position="166"/>
        <end position="186"/>
    </location>
</feature>
<feature type="transmembrane region" description="Helical" evidence="1">
    <location>
        <begin position="264"/>
        <end position="284"/>
    </location>
</feature>
<feature type="transmembrane region" description="Helical" evidence="1">
    <location>
        <begin position="301"/>
        <end position="321"/>
    </location>
</feature>
<feature type="region of interest" description="Disordered" evidence="2">
    <location>
        <begin position="580"/>
        <end position="609"/>
    </location>
</feature>
<feature type="coiled-coil region" evidence="1">
    <location>
        <begin position="640"/>
        <end position="672"/>
    </location>
</feature>
<feature type="compositionally biased region" description="Acidic residues" evidence="2">
    <location>
        <begin position="592"/>
        <end position="609"/>
    </location>
</feature>
<organism>
    <name type="scientific">Nephroselmis olivacea</name>
    <name type="common">Green alga</name>
    <dbReference type="NCBI Taxonomy" id="31312"/>
    <lineage>
        <taxon>Eukaryota</taxon>
        <taxon>Viridiplantae</taxon>
        <taxon>Chlorophyta</taxon>
        <taxon>Nephroselmidophyceae</taxon>
        <taxon>Nephroselmidales</taxon>
        <taxon>Nephroselmidaceae</taxon>
        <taxon>Nephroselmis</taxon>
    </lineage>
</organism>
<evidence type="ECO:0000255" key="1"/>
<evidence type="ECO:0000256" key="2">
    <source>
        <dbReference type="SAM" id="MobiDB-lite"/>
    </source>
</evidence>
<evidence type="ECO:0000305" key="3"/>
<dbReference type="EMBL" id="AF137379">
    <property type="protein sequence ID" value="AAD54900.1"/>
    <property type="molecule type" value="Genomic_DNA"/>
</dbReference>
<dbReference type="RefSeq" id="NP_050929.1">
    <property type="nucleotide sequence ID" value="NC_000927.1"/>
</dbReference>
<dbReference type="SMR" id="Q9TKU7"/>
<dbReference type="GeneID" id="801931"/>
<dbReference type="GO" id="GO:0031969">
    <property type="term" value="C:chloroplast membrane"/>
    <property type="evidence" value="ECO:0007669"/>
    <property type="project" value="UniProtKB-SubCell"/>
</dbReference>
<reference key="1">
    <citation type="journal article" date="1999" name="Proc. Natl. Acad. Sci. U.S.A.">
        <title>The complete chloroplast DNA sequence of the green alga Nephroselmis olivacea: insights into the architecture of ancestral chloroplast genomes.</title>
        <authorList>
            <person name="Turmel M."/>
            <person name="Otis C."/>
            <person name="Lemieux C."/>
        </authorList>
    </citation>
    <scope>NUCLEOTIDE SEQUENCE [LARGE SCALE GENOMIC DNA]</scope>
    <source>
        <strain>NIES-484 / S-N-5-8</strain>
    </source>
</reference>
<keyword id="KW-0150">Chloroplast</keyword>
<keyword id="KW-0175">Coiled coil</keyword>
<keyword id="KW-0472">Membrane</keyword>
<keyword id="KW-0934">Plastid</keyword>
<keyword id="KW-0812">Transmembrane</keyword>
<keyword id="KW-1133">Transmembrane helix</keyword>
<proteinExistence type="inferred from homology"/>
<gene>
    <name type="primary">ycf78</name>
    <name type="synonym">ycf1</name>
</gene>
<comment type="subcellular location">
    <subcellularLocation>
        <location evidence="3">Plastid</location>
        <location evidence="3">Chloroplast membrane</location>
        <topology evidence="3">Multi-pass membrane protein</topology>
    </subcellularLocation>
</comment>
<comment type="similarity">
    <text evidence="3">Belongs to the ycf78 family.</text>
</comment>
<accession>Q9TKU7</accession>
<geneLocation type="chloroplast"/>